<name>TPIS_STRR6</name>
<protein>
    <recommendedName>
        <fullName evidence="1">Triosephosphate isomerase</fullName>
        <shortName evidence="1">TIM</shortName>
        <shortName evidence="1">TPI</shortName>
        <ecNumber evidence="1">5.3.1.1</ecNumber>
    </recommendedName>
    <alternativeName>
        <fullName evidence="1">Triose-phosphate isomerase</fullName>
    </alternativeName>
</protein>
<keyword id="KW-0963">Cytoplasm</keyword>
<keyword id="KW-0312">Gluconeogenesis</keyword>
<keyword id="KW-0324">Glycolysis</keyword>
<keyword id="KW-0413">Isomerase</keyword>
<keyword id="KW-1185">Reference proteome</keyword>
<organism>
    <name type="scientific">Streptococcus pneumoniae (strain ATCC BAA-255 / R6)</name>
    <dbReference type="NCBI Taxonomy" id="171101"/>
    <lineage>
        <taxon>Bacteria</taxon>
        <taxon>Bacillati</taxon>
        <taxon>Bacillota</taxon>
        <taxon>Bacilli</taxon>
        <taxon>Lactobacillales</taxon>
        <taxon>Streptococcaceae</taxon>
        <taxon>Streptococcus</taxon>
    </lineage>
</organism>
<evidence type="ECO:0000255" key="1">
    <source>
        <dbReference type="HAMAP-Rule" id="MF_00147"/>
    </source>
</evidence>
<evidence type="ECO:0000305" key="2"/>
<reference key="1">
    <citation type="journal article" date="2001" name="J. Bacteriol.">
        <title>Genome of the bacterium Streptococcus pneumoniae strain R6.</title>
        <authorList>
            <person name="Hoskins J."/>
            <person name="Alborn W.E. Jr."/>
            <person name="Arnold J."/>
            <person name="Blaszczak L.C."/>
            <person name="Burgett S."/>
            <person name="DeHoff B.S."/>
            <person name="Estrem S.T."/>
            <person name="Fritz L."/>
            <person name="Fu D.-J."/>
            <person name="Fuller W."/>
            <person name="Geringer C."/>
            <person name="Gilmour R."/>
            <person name="Glass J.S."/>
            <person name="Khoja H."/>
            <person name="Kraft A.R."/>
            <person name="Lagace R.E."/>
            <person name="LeBlanc D.J."/>
            <person name="Lee L.N."/>
            <person name="Lefkowitz E.J."/>
            <person name="Lu J."/>
            <person name="Matsushima P."/>
            <person name="McAhren S.M."/>
            <person name="McHenney M."/>
            <person name="McLeaster K."/>
            <person name="Mundy C.W."/>
            <person name="Nicas T.I."/>
            <person name="Norris F.H."/>
            <person name="O'Gara M."/>
            <person name="Peery R.B."/>
            <person name="Robertson G.T."/>
            <person name="Rockey P."/>
            <person name="Sun P.-M."/>
            <person name="Winkler M.E."/>
            <person name="Yang Y."/>
            <person name="Young-Bellido M."/>
            <person name="Zhao G."/>
            <person name="Zook C.A."/>
            <person name="Baltz R.H."/>
            <person name="Jaskunas S.R."/>
            <person name="Rosteck P.R. Jr."/>
            <person name="Skatrud P.L."/>
            <person name="Glass J.I."/>
        </authorList>
    </citation>
    <scope>NUCLEOTIDE SEQUENCE [LARGE SCALE GENOMIC DNA]</scope>
    <source>
        <strain>ATCC BAA-255 / R6</strain>
    </source>
</reference>
<gene>
    <name evidence="1" type="primary">tpiA</name>
    <name type="synonym">tpi</name>
    <name type="ordered locus">spr1432</name>
</gene>
<accession>P66943</accession>
<accession>Q97PN1</accession>
<dbReference type="EC" id="5.3.1.1" evidence="1"/>
<dbReference type="EMBL" id="AE007317">
    <property type="protein sequence ID" value="AAL00236.1"/>
    <property type="status" value="ALT_INIT"/>
    <property type="molecule type" value="Genomic_DNA"/>
</dbReference>
<dbReference type="PIR" id="G98050">
    <property type="entry name" value="G98050"/>
</dbReference>
<dbReference type="RefSeq" id="NP_359025.1">
    <property type="nucleotide sequence ID" value="NC_003098.1"/>
</dbReference>
<dbReference type="RefSeq" id="WP_000087897.1">
    <property type="nucleotide sequence ID" value="NC_003098.1"/>
</dbReference>
<dbReference type="SMR" id="P66943"/>
<dbReference type="STRING" id="171101.spr1432"/>
<dbReference type="GeneID" id="45653189"/>
<dbReference type="KEGG" id="spr:spr1432"/>
<dbReference type="PATRIC" id="fig|171101.6.peg.1547"/>
<dbReference type="eggNOG" id="COG0149">
    <property type="taxonomic scope" value="Bacteria"/>
</dbReference>
<dbReference type="HOGENOM" id="CLU_024251_2_3_9"/>
<dbReference type="UniPathway" id="UPA00109">
    <property type="reaction ID" value="UER00189"/>
</dbReference>
<dbReference type="UniPathway" id="UPA00138"/>
<dbReference type="Proteomes" id="UP000000586">
    <property type="component" value="Chromosome"/>
</dbReference>
<dbReference type="GO" id="GO:0005829">
    <property type="term" value="C:cytosol"/>
    <property type="evidence" value="ECO:0000318"/>
    <property type="project" value="GO_Central"/>
</dbReference>
<dbReference type="GO" id="GO:0004807">
    <property type="term" value="F:triose-phosphate isomerase activity"/>
    <property type="evidence" value="ECO:0000318"/>
    <property type="project" value="GO_Central"/>
</dbReference>
<dbReference type="GO" id="GO:0006094">
    <property type="term" value="P:gluconeogenesis"/>
    <property type="evidence" value="ECO:0000318"/>
    <property type="project" value="GO_Central"/>
</dbReference>
<dbReference type="GO" id="GO:0046166">
    <property type="term" value="P:glyceraldehyde-3-phosphate biosynthetic process"/>
    <property type="evidence" value="ECO:0000318"/>
    <property type="project" value="GO_Central"/>
</dbReference>
<dbReference type="GO" id="GO:0019563">
    <property type="term" value="P:glycerol catabolic process"/>
    <property type="evidence" value="ECO:0000318"/>
    <property type="project" value="GO_Central"/>
</dbReference>
<dbReference type="GO" id="GO:0006096">
    <property type="term" value="P:glycolytic process"/>
    <property type="evidence" value="ECO:0000318"/>
    <property type="project" value="GO_Central"/>
</dbReference>
<dbReference type="CDD" id="cd00311">
    <property type="entry name" value="TIM"/>
    <property type="match status" value="1"/>
</dbReference>
<dbReference type="FunFam" id="3.20.20.70:FF:000016">
    <property type="entry name" value="Triosephosphate isomerase"/>
    <property type="match status" value="1"/>
</dbReference>
<dbReference type="Gene3D" id="3.20.20.70">
    <property type="entry name" value="Aldolase class I"/>
    <property type="match status" value="1"/>
</dbReference>
<dbReference type="HAMAP" id="MF_00147_B">
    <property type="entry name" value="TIM_B"/>
    <property type="match status" value="1"/>
</dbReference>
<dbReference type="InterPro" id="IPR013785">
    <property type="entry name" value="Aldolase_TIM"/>
</dbReference>
<dbReference type="InterPro" id="IPR035990">
    <property type="entry name" value="TIM_sf"/>
</dbReference>
<dbReference type="InterPro" id="IPR022896">
    <property type="entry name" value="TrioseP_Isoase_bac/euk"/>
</dbReference>
<dbReference type="InterPro" id="IPR000652">
    <property type="entry name" value="Triosephosphate_isomerase"/>
</dbReference>
<dbReference type="InterPro" id="IPR020861">
    <property type="entry name" value="Triosephosphate_isomerase_AS"/>
</dbReference>
<dbReference type="NCBIfam" id="TIGR00419">
    <property type="entry name" value="tim"/>
    <property type="match status" value="1"/>
</dbReference>
<dbReference type="PANTHER" id="PTHR21139">
    <property type="entry name" value="TRIOSEPHOSPHATE ISOMERASE"/>
    <property type="match status" value="1"/>
</dbReference>
<dbReference type="PANTHER" id="PTHR21139:SF42">
    <property type="entry name" value="TRIOSEPHOSPHATE ISOMERASE"/>
    <property type="match status" value="1"/>
</dbReference>
<dbReference type="Pfam" id="PF00121">
    <property type="entry name" value="TIM"/>
    <property type="match status" value="1"/>
</dbReference>
<dbReference type="SUPFAM" id="SSF51351">
    <property type="entry name" value="Triosephosphate isomerase (TIM)"/>
    <property type="match status" value="1"/>
</dbReference>
<dbReference type="PROSITE" id="PS00171">
    <property type="entry name" value="TIM_1"/>
    <property type="match status" value="1"/>
</dbReference>
<dbReference type="PROSITE" id="PS51440">
    <property type="entry name" value="TIM_2"/>
    <property type="match status" value="1"/>
</dbReference>
<sequence>MSRKPFIAGNWKMNKNPEEAKAFVEAVASKLPSSDLVEAGIAAPALDLTTVLAVAKGSNLKVAAQNCYFENAGAFTGETSPQVLKEIGTDYVVIGHSERRDYFHETDEDINKKAKAIFANGMLPIICCGESLETYEAGKAAEFVGAQVSAALAGLTAEQVAASVIAYEPIWAIGTGKSASQDDAQKMCKVVRDVVAADFGQEVADKVRVQYGGSVKPENVASYMACPDVDGALVGGASLEAESFLALLDFVK</sequence>
<proteinExistence type="inferred from homology"/>
<feature type="chain" id="PRO_0000090298" description="Triosephosphate isomerase">
    <location>
        <begin position="1"/>
        <end position="252"/>
    </location>
</feature>
<feature type="active site" description="Electrophile" evidence="1">
    <location>
        <position position="96"/>
    </location>
</feature>
<feature type="active site" description="Proton acceptor" evidence="1">
    <location>
        <position position="168"/>
    </location>
</feature>
<feature type="binding site" evidence="1">
    <location>
        <begin position="10"/>
        <end position="12"/>
    </location>
    <ligand>
        <name>substrate</name>
    </ligand>
</feature>
<feature type="binding site" evidence="1">
    <location>
        <position position="174"/>
    </location>
    <ligand>
        <name>substrate</name>
    </ligand>
</feature>
<feature type="binding site" evidence="1">
    <location>
        <position position="214"/>
    </location>
    <ligand>
        <name>substrate</name>
    </ligand>
</feature>
<feature type="binding site" evidence="1">
    <location>
        <begin position="235"/>
        <end position="236"/>
    </location>
    <ligand>
        <name>substrate</name>
    </ligand>
</feature>
<comment type="function">
    <text evidence="1">Involved in the gluconeogenesis. Catalyzes stereospecifically the conversion of dihydroxyacetone phosphate (DHAP) to D-glyceraldehyde-3-phosphate (G3P).</text>
</comment>
<comment type="catalytic activity">
    <reaction evidence="1">
        <text>D-glyceraldehyde 3-phosphate = dihydroxyacetone phosphate</text>
        <dbReference type="Rhea" id="RHEA:18585"/>
        <dbReference type="ChEBI" id="CHEBI:57642"/>
        <dbReference type="ChEBI" id="CHEBI:59776"/>
        <dbReference type="EC" id="5.3.1.1"/>
    </reaction>
</comment>
<comment type="pathway">
    <text evidence="1">Carbohydrate biosynthesis; gluconeogenesis.</text>
</comment>
<comment type="pathway">
    <text evidence="1">Carbohydrate degradation; glycolysis; D-glyceraldehyde 3-phosphate from glycerone phosphate: step 1/1.</text>
</comment>
<comment type="subunit">
    <text evidence="1">Homodimer.</text>
</comment>
<comment type="subcellular location">
    <subcellularLocation>
        <location evidence="1">Cytoplasm</location>
    </subcellularLocation>
</comment>
<comment type="similarity">
    <text evidence="1">Belongs to the triosephosphate isomerase family.</text>
</comment>
<comment type="sequence caution" evidence="2">
    <conflict type="erroneous initiation">
        <sequence resource="EMBL-CDS" id="AAL00236"/>
    </conflict>
</comment>